<organism>
    <name type="scientific">Saccharomyces cerevisiae (strain ATCC 204508 / S288c)</name>
    <name type="common">Baker's yeast</name>
    <dbReference type="NCBI Taxonomy" id="559292"/>
    <lineage>
        <taxon>Eukaryota</taxon>
        <taxon>Fungi</taxon>
        <taxon>Dikarya</taxon>
        <taxon>Ascomycota</taxon>
        <taxon>Saccharomycotina</taxon>
        <taxon>Saccharomycetes</taxon>
        <taxon>Saccharomycetales</taxon>
        <taxon>Saccharomycetaceae</taxon>
        <taxon>Saccharomyces</taxon>
    </lineage>
</organism>
<accession>P38801</accession>
<accession>D3DL32</accession>
<name>LRP1_YEAST</name>
<gene>
    <name type="primary">LRP1</name>
    <name type="synonym">RRP47</name>
    <name type="synonym">YC1D</name>
    <name type="ordered locus">YHR081W</name>
</gene>
<reference key="1">
    <citation type="journal article" date="1994" name="Science">
        <title>Complete nucleotide sequence of Saccharomyces cerevisiae chromosome VIII.</title>
        <authorList>
            <person name="Johnston M."/>
            <person name="Andrews S."/>
            <person name="Brinkman R."/>
            <person name="Cooper J."/>
            <person name="Ding H."/>
            <person name="Dover J."/>
            <person name="Du Z."/>
            <person name="Favello A."/>
            <person name="Fulton L."/>
            <person name="Gattung S."/>
            <person name="Geisel C."/>
            <person name="Kirsten J."/>
            <person name="Kucaba T."/>
            <person name="Hillier L.W."/>
            <person name="Jier M."/>
            <person name="Johnston L."/>
            <person name="Langston Y."/>
            <person name="Latreille P."/>
            <person name="Louis E.J."/>
            <person name="Macri C."/>
            <person name="Mardis E."/>
            <person name="Menezes S."/>
            <person name="Mouser L."/>
            <person name="Nhan M."/>
            <person name="Rifkin L."/>
            <person name="Riles L."/>
            <person name="St Peter H."/>
            <person name="Trevaskis E."/>
            <person name="Vaughan K."/>
            <person name="Vignati D."/>
            <person name="Wilcox L."/>
            <person name="Wohldman P."/>
            <person name="Waterston R."/>
            <person name="Wilson R."/>
            <person name="Vaudin M."/>
        </authorList>
    </citation>
    <scope>NUCLEOTIDE SEQUENCE [LARGE SCALE GENOMIC DNA]</scope>
    <source>
        <strain>ATCC 204508 / S288c</strain>
    </source>
</reference>
<reference key="2">
    <citation type="journal article" date="2014" name="G3 (Bethesda)">
        <title>The reference genome sequence of Saccharomyces cerevisiae: Then and now.</title>
        <authorList>
            <person name="Engel S.R."/>
            <person name="Dietrich F.S."/>
            <person name="Fisk D.G."/>
            <person name="Binkley G."/>
            <person name="Balakrishnan R."/>
            <person name="Costanzo M.C."/>
            <person name="Dwight S.S."/>
            <person name="Hitz B.C."/>
            <person name="Karra K."/>
            <person name="Nash R.S."/>
            <person name="Weng S."/>
            <person name="Wong E.D."/>
            <person name="Lloyd P."/>
            <person name="Skrzypek M.S."/>
            <person name="Miyasato S.R."/>
            <person name="Simison M."/>
            <person name="Cherry J.M."/>
        </authorList>
    </citation>
    <scope>GENOME REANNOTATION</scope>
    <source>
        <strain>ATCC 204508 / S288c</strain>
    </source>
</reference>
<reference key="3">
    <citation type="journal article" date="2002" name="Genes Dev.">
        <title>Subcellular localization of the yeast proteome.</title>
        <authorList>
            <person name="Kumar A."/>
            <person name="Agarwal S."/>
            <person name="Heyman J.A."/>
            <person name="Matson S."/>
            <person name="Heidtman M."/>
            <person name="Piccirillo S."/>
            <person name="Umansky L."/>
            <person name="Drawid A."/>
            <person name="Jansen R."/>
            <person name="Liu Y."/>
            <person name="Cheung K.-H."/>
            <person name="Miller P."/>
            <person name="Gerstein M."/>
            <person name="Roeder G.S."/>
            <person name="Snyder M."/>
        </authorList>
    </citation>
    <scope>SUBCELLULAR LOCATION</scope>
</reference>
<reference key="4">
    <citation type="journal article" date="2002" name="Mol. Microbiol.">
        <title>Saccharomyces cerevisiae C1D is implicated in both non-homologous DNA end joining and homologous recombination.</title>
        <authorList>
            <person name="Erdemir T."/>
            <person name="Bilican B."/>
            <person name="Cagatay T."/>
            <person name="Goding C.R."/>
            <person name="Yavuzer U."/>
        </authorList>
    </citation>
    <scope>FUNCTION</scope>
</reference>
<reference key="5">
    <citation type="journal article" date="2003" name="Cell">
        <title>A panoramic view of yeast noncoding RNA processing.</title>
        <authorList>
            <person name="Peng W.-T."/>
            <person name="Robinson M.D."/>
            <person name="Mnaimneh S."/>
            <person name="Krogan N.J."/>
            <person name="Cagney G."/>
            <person name="Morris Q.D."/>
            <person name="Davierwala A.P."/>
            <person name="Grigull J."/>
            <person name="Yang X."/>
            <person name="Zhang W."/>
            <person name="Mitsakakis N."/>
            <person name="Ryan O.W."/>
            <person name="Datta N."/>
            <person name="Jojic V."/>
            <person name="Pal C."/>
            <person name="Canadien V."/>
            <person name="Richards D.P."/>
            <person name="Beattie B."/>
            <person name="Wu L.F."/>
            <person name="Altschuler S.J."/>
            <person name="Roweis S."/>
            <person name="Frey B.J."/>
            <person name="Emili A."/>
            <person name="Greenblatt J.F."/>
            <person name="Hughes T.R."/>
        </authorList>
    </citation>
    <scope>FUNCTION</scope>
    <scope>INTERACTION WITH RRP45 AND RRP46</scope>
</reference>
<reference key="6">
    <citation type="journal article" date="2003" name="Mol. Cell. Biol.">
        <title>Rrp47p is an exosome-associated protein required for the 3' processing of stable RNAs.</title>
        <authorList>
            <person name="Mitchell P."/>
            <person name="Petfalski E."/>
            <person name="Houalla R."/>
            <person name="Podtelejnikov A."/>
            <person name="Mann M."/>
            <person name="Tollervey D."/>
        </authorList>
    </citation>
    <scope>FUNCTION</scope>
    <scope>INTERACTION WITH RRP4 AND RRP6</scope>
    <scope>SUBCELLULAR LOCATION</scope>
    <scope>IDENTIFICATION BY MASS SPECTROMETRY</scope>
</reference>
<reference key="7">
    <citation type="journal article" date="2004" name="Genes Dev.">
        <title>Genome-wide mRNA surveillance is coupled to mRNA export.</title>
        <authorList>
            <person name="Hieronymus H."/>
            <person name="Yu M.C."/>
            <person name="Silver P.A."/>
        </authorList>
    </citation>
    <scope>FUNCTION</scope>
    <scope>INTERACTION RRP6</scope>
    <scope>SUBCELLULAR LOCATION</scope>
</reference>
<reference key="8">
    <citation type="journal article" date="2004" name="Proc. Natl. Acad. Sci. U.S.A.">
        <title>A genome-wide screen for Saccharomyces cerevisiae deletion mutants that affect telomere length.</title>
        <authorList>
            <person name="Askree S.H."/>
            <person name="Yehuda T."/>
            <person name="Smolikov S."/>
            <person name="Gurevich R."/>
            <person name="Hawk J."/>
            <person name="Coker C."/>
            <person name="Krauskopf A."/>
            <person name="Kupiec M."/>
            <person name="McEachern M.J."/>
        </authorList>
    </citation>
    <scope>FUNCTION</scope>
</reference>
<reference key="9">
    <citation type="journal article" date="2012" name="Proc. Natl. Acad. Sci. U.S.A.">
        <title>N-terminal acetylome analyses and functional insights of the N-terminal acetyltransferase NatB.</title>
        <authorList>
            <person name="Van Damme P."/>
            <person name="Lasa M."/>
            <person name="Polevoda B."/>
            <person name="Gazquez C."/>
            <person name="Elosegui-Artola A."/>
            <person name="Kim D.S."/>
            <person name="De Juan-Pardo E."/>
            <person name="Demeyer K."/>
            <person name="Hole K."/>
            <person name="Larrea E."/>
            <person name="Timmerman E."/>
            <person name="Prieto J."/>
            <person name="Arnesen T."/>
            <person name="Sherman F."/>
            <person name="Gevaert K."/>
            <person name="Aldabe R."/>
        </authorList>
    </citation>
    <scope>IDENTIFICATION BY MASS SPECTROMETRY [LARGE SCALE ANALYSIS]</scope>
</reference>
<keyword id="KW-0002">3D-structure</keyword>
<keyword id="KW-0271">Exosome</keyword>
<keyword id="KW-0539">Nucleus</keyword>
<keyword id="KW-1185">Reference proteome</keyword>
<keyword id="KW-0694">RNA-binding</keyword>
<keyword id="KW-0698">rRNA processing</keyword>
<comment type="function">
    <text evidence="3 4 5 6 7">Required for exosome-dependent processing of pre-rRNA and small nucleolar RNA (snRNA) precursors. Involved in processing of 35S pre-rRNA at the A0, A1 and A2 sites. Required for activity of RRP6 in 7S pre-rRNA processing. Also has a role in 3'-processing of U4 and U5 small nuclear RNAs (snRNAs). Acts as a mRNA export factor. Mediates mRNA degradation upon UV irradiation. Maintains genome integrity where it is involved in both non-homologous end joining (NHEJ) and homologous recombination pathway repair of double strand DNA breaks. During NHEJ, required for joining 3'-overhanging ends. Also involved in telomere length regulation and maintenance.</text>
</comment>
<comment type="subunit">
    <text evidence="4 5 7">Associates with nuclear form of the RNA exosome complex. Interacts with RRP4, RRP6, RRP45 and RRP46.</text>
</comment>
<comment type="subcellular location">
    <subcellularLocation>
        <location evidence="2 5 7">Nucleus</location>
    </subcellularLocation>
</comment>
<comment type="similarity">
    <text evidence="8">Belongs to the C1D family.</text>
</comment>
<evidence type="ECO:0000256" key="1">
    <source>
        <dbReference type="SAM" id="MobiDB-lite"/>
    </source>
</evidence>
<evidence type="ECO:0000269" key="2">
    <source>
    </source>
</evidence>
<evidence type="ECO:0000269" key="3">
    <source>
    </source>
</evidence>
<evidence type="ECO:0000269" key="4">
    <source>
    </source>
</evidence>
<evidence type="ECO:0000269" key="5">
    <source>
    </source>
</evidence>
<evidence type="ECO:0000269" key="6">
    <source>
    </source>
</evidence>
<evidence type="ECO:0000269" key="7">
    <source>
    </source>
</evidence>
<evidence type="ECO:0000305" key="8"/>
<evidence type="ECO:0007829" key="9">
    <source>
        <dbReference type="PDB" id="4WFC"/>
    </source>
</evidence>
<feature type="chain" id="PRO_0000202902" description="Exosome complex protein LRP1">
    <location>
        <begin position="1"/>
        <end position="184"/>
    </location>
</feature>
<feature type="region of interest" description="Disordered" evidence="1">
    <location>
        <begin position="157"/>
        <end position="184"/>
    </location>
</feature>
<feature type="compositionally biased region" description="Basic residues" evidence="1">
    <location>
        <begin position="164"/>
        <end position="184"/>
    </location>
</feature>
<feature type="helix" evidence="9">
    <location>
        <begin position="4"/>
        <end position="6"/>
    </location>
</feature>
<feature type="helix" evidence="9">
    <location>
        <begin position="8"/>
        <end position="28"/>
    </location>
</feature>
<feature type="helix" evidence="9">
    <location>
        <begin position="33"/>
        <end position="39"/>
    </location>
</feature>
<feature type="helix" evidence="9">
    <location>
        <begin position="43"/>
        <end position="67"/>
    </location>
</feature>
<feature type="helix" evidence="9">
    <location>
        <begin position="74"/>
        <end position="119"/>
    </location>
</feature>
<dbReference type="EMBL" id="U10556">
    <property type="protein sequence ID" value="AAB68886.1"/>
    <property type="molecule type" value="Genomic_DNA"/>
</dbReference>
<dbReference type="EMBL" id="BK006934">
    <property type="protein sequence ID" value="DAA06776.1"/>
    <property type="molecule type" value="Genomic_DNA"/>
</dbReference>
<dbReference type="PIR" id="S46808">
    <property type="entry name" value="S46808"/>
</dbReference>
<dbReference type="RefSeq" id="NP_011949.1">
    <property type="nucleotide sequence ID" value="NM_001179211.1"/>
</dbReference>
<dbReference type="PDB" id="4WFC">
    <property type="method" value="X-ray"/>
    <property type="resolution" value="2.35 A"/>
    <property type="chains" value="B/D/F=1-133"/>
</dbReference>
<dbReference type="PDB" id="4WFD">
    <property type="method" value="X-ray"/>
    <property type="resolution" value="2.40 A"/>
    <property type="chains" value="B/E/H=1-103"/>
</dbReference>
<dbReference type="PDB" id="5C0W">
    <property type="method" value="X-ray"/>
    <property type="resolution" value="4.60 A"/>
    <property type="chains" value="L=1-184"/>
</dbReference>
<dbReference type="PDB" id="6FSZ">
    <property type="method" value="EM"/>
    <property type="resolution" value="4.60 A"/>
    <property type="chains" value="LL=1-184"/>
</dbReference>
<dbReference type="PDB" id="6FT6">
    <property type="method" value="EM"/>
    <property type="resolution" value="3.90 A"/>
    <property type="chains" value="LL=1-184"/>
</dbReference>
<dbReference type="PDB" id="6LQS">
    <property type="method" value="EM"/>
    <property type="resolution" value="3.80 A"/>
    <property type="chains" value="R7=1-184"/>
</dbReference>
<dbReference type="PDB" id="7D4I">
    <property type="method" value="EM"/>
    <property type="resolution" value="4.00 A"/>
    <property type="chains" value="R7=1-184"/>
</dbReference>
<dbReference type="PDBsum" id="4WFC"/>
<dbReference type="PDBsum" id="4WFD"/>
<dbReference type="PDBsum" id="5C0W"/>
<dbReference type="PDBsum" id="6FSZ"/>
<dbReference type="PDBsum" id="6FT6"/>
<dbReference type="PDBsum" id="6LQS"/>
<dbReference type="PDBsum" id="7D4I"/>
<dbReference type="EMDB" id="EMD-0952"/>
<dbReference type="EMDB" id="EMD-30574"/>
<dbReference type="EMDB" id="EMD-4301"/>
<dbReference type="EMDB" id="EMD-4302"/>
<dbReference type="SMR" id="P38801"/>
<dbReference type="BioGRID" id="36516">
    <property type="interactions" value="507"/>
</dbReference>
<dbReference type="DIP" id="DIP-4359N"/>
<dbReference type="FunCoup" id="P38801">
    <property type="interactions" value="370"/>
</dbReference>
<dbReference type="IntAct" id="P38801">
    <property type="interactions" value="63"/>
</dbReference>
<dbReference type="MINT" id="P38801"/>
<dbReference type="STRING" id="4932.YHR081W"/>
<dbReference type="iPTMnet" id="P38801"/>
<dbReference type="PaxDb" id="4932-YHR081W"/>
<dbReference type="PeptideAtlas" id="P38801"/>
<dbReference type="EnsemblFungi" id="YHR081W_mRNA">
    <property type="protein sequence ID" value="YHR081W"/>
    <property type="gene ID" value="YHR081W"/>
</dbReference>
<dbReference type="GeneID" id="856481"/>
<dbReference type="KEGG" id="sce:YHR081W"/>
<dbReference type="AGR" id="SGD:S000001123"/>
<dbReference type="SGD" id="S000001123">
    <property type="gene designation" value="LRP1"/>
</dbReference>
<dbReference type="VEuPathDB" id="FungiDB:YHR081W"/>
<dbReference type="eggNOG" id="KOG4835">
    <property type="taxonomic scope" value="Eukaryota"/>
</dbReference>
<dbReference type="HOGENOM" id="CLU_101423_1_0_1"/>
<dbReference type="InParanoid" id="P38801"/>
<dbReference type="OMA" id="FQGTHTK"/>
<dbReference type="OrthoDB" id="1421013at2759"/>
<dbReference type="BioCyc" id="YEAST:G3O-31128-MONOMER"/>
<dbReference type="Reactome" id="R-SCE-6791226">
    <property type="pathway name" value="Major pathway of rRNA processing in the nucleolus and cytosol"/>
</dbReference>
<dbReference type="BioGRID-ORCS" id="856481">
    <property type="hits" value="2 hits in 10 CRISPR screens"/>
</dbReference>
<dbReference type="EvolutionaryTrace" id="P38801"/>
<dbReference type="PRO" id="PR:P38801"/>
<dbReference type="Proteomes" id="UP000002311">
    <property type="component" value="Chromosome VIII"/>
</dbReference>
<dbReference type="RNAct" id="P38801">
    <property type="molecule type" value="protein"/>
</dbReference>
<dbReference type="GO" id="GO:0000178">
    <property type="term" value="C:exosome (RNase complex)"/>
    <property type="evidence" value="ECO:0000318"/>
    <property type="project" value="GO_Central"/>
</dbReference>
<dbReference type="GO" id="GO:0005730">
    <property type="term" value="C:nucleolus"/>
    <property type="evidence" value="ECO:0000318"/>
    <property type="project" value="GO_Central"/>
</dbReference>
<dbReference type="GO" id="GO:0005634">
    <property type="term" value="C:nucleus"/>
    <property type="evidence" value="ECO:0000314"/>
    <property type="project" value="SGD"/>
</dbReference>
<dbReference type="GO" id="GO:0003677">
    <property type="term" value="F:DNA binding"/>
    <property type="evidence" value="ECO:0000318"/>
    <property type="project" value="GO_Central"/>
</dbReference>
<dbReference type="GO" id="GO:0003690">
    <property type="term" value="F:double-stranded DNA binding"/>
    <property type="evidence" value="ECO:0000314"/>
    <property type="project" value="SGD"/>
</dbReference>
<dbReference type="GO" id="GO:0003725">
    <property type="term" value="F:double-stranded RNA binding"/>
    <property type="evidence" value="ECO:0000314"/>
    <property type="project" value="SGD"/>
</dbReference>
<dbReference type="GO" id="GO:0030234">
    <property type="term" value="F:enzyme regulator activity"/>
    <property type="evidence" value="ECO:0000314"/>
    <property type="project" value="SGD"/>
</dbReference>
<dbReference type="GO" id="GO:0044877">
    <property type="term" value="F:protein-containing complex binding"/>
    <property type="evidence" value="ECO:0000314"/>
    <property type="project" value="SGD"/>
</dbReference>
<dbReference type="GO" id="GO:0003723">
    <property type="term" value="F:RNA binding"/>
    <property type="evidence" value="ECO:0000318"/>
    <property type="project" value="GO_Central"/>
</dbReference>
<dbReference type="GO" id="GO:0000467">
    <property type="term" value="P:exonucleolytic trimming to generate mature 3'-end of 5.8S rRNA from tricistronic rRNA transcript (SSU-rRNA, 5.8S rRNA, LSU-rRNA)"/>
    <property type="evidence" value="ECO:0000315"/>
    <property type="project" value="SGD"/>
</dbReference>
<dbReference type="GO" id="GO:0000460">
    <property type="term" value="P:maturation of 5.8S rRNA"/>
    <property type="evidence" value="ECO:0000318"/>
    <property type="project" value="GO_Central"/>
</dbReference>
<dbReference type="GO" id="GO:0071028">
    <property type="term" value="P:nuclear mRNA surveillance"/>
    <property type="evidence" value="ECO:0000315"/>
    <property type="project" value="SGD"/>
</dbReference>
<dbReference type="GO" id="GO:0071039">
    <property type="term" value="P:nuclear polyadenylation-dependent CUT catabolic process"/>
    <property type="evidence" value="ECO:0000315"/>
    <property type="project" value="SGD"/>
</dbReference>
<dbReference type="GO" id="GO:0071035">
    <property type="term" value="P:nuclear polyadenylation-dependent rRNA catabolic process"/>
    <property type="evidence" value="ECO:0000315"/>
    <property type="project" value="SGD"/>
</dbReference>
<dbReference type="GO" id="GO:0071051">
    <property type="term" value="P:poly(A)-dependent snoRNA 3'-end processing"/>
    <property type="evidence" value="ECO:0000315"/>
    <property type="project" value="SGD"/>
</dbReference>
<dbReference type="GO" id="GO:0000973">
    <property type="term" value="P:post-transcriptional tethering of RNA polymerase II gene DNA at nuclear periphery"/>
    <property type="evidence" value="ECO:0000315"/>
    <property type="project" value="SGD"/>
</dbReference>
<dbReference type="GO" id="GO:0010468">
    <property type="term" value="P:regulation of gene expression"/>
    <property type="evidence" value="ECO:0000318"/>
    <property type="project" value="GO_Central"/>
</dbReference>
<dbReference type="GO" id="GO:0034475">
    <property type="term" value="P:U4 snRNA 3'-end processing"/>
    <property type="evidence" value="ECO:0000315"/>
    <property type="project" value="SGD"/>
</dbReference>
<dbReference type="GO" id="GO:0034476">
    <property type="term" value="P:U5 snRNA 3'-end processing"/>
    <property type="evidence" value="ECO:0000315"/>
    <property type="project" value="SGD"/>
</dbReference>
<dbReference type="DisProt" id="DP00788"/>
<dbReference type="InterPro" id="IPR011082">
    <property type="entry name" value="Exosome-assoc_fac/DNA_repair"/>
</dbReference>
<dbReference type="InterPro" id="IPR007146">
    <property type="entry name" value="Sas10/Utp3/C1D"/>
</dbReference>
<dbReference type="PANTHER" id="PTHR15341:SF3">
    <property type="entry name" value="NUCLEAR NUCLEIC ACID-BINDING PROTEIN C1D"/>
    <property type="match status" value="1"/>
</dbReference>
<dbReference type="PANTHER" id="PTHR15341">
    <property type="entry name" value="SUN-COR STEROID HORMONE RECEPTOR CO-REPRESSOR"/>
    <property type="match status" value="1"/>
</dbReference>
<dbReference type="Pfam" id="PF04000">
    <property type="entry name" value="Sas10_Utp3"/>
    <property type="match status" value="1"/>
</dbReference>
<proteinExistence type="evidence at protein level"/>
<sequence length="184" mass="21045">MEDIEKIKPYVRSFSKALDELKPEIEKLTSKSLDEQLLLLSDERAKLELINRYAYVLSSLMFANMKVLGVKDMSPILGELKRVKSYMDKAKQYDNRITKSNEKSQAEQEKAKNIISNVLDGNKNQFEPSISRSNFQGKHTKFENDELAESTTTKIIDSTDHIRKASSKKSKRLDKVGKKKGGKK</sequence>
<protein>
    <recommendedName>
        <fullName>Exosome complex protein LRP1</fullName>
    </recommendedName>
    <alternativeName>
        <fullName>Like an rRNA processing protein 1</fullName>
    </alternativeName>
    <alternativeName>
        <fullName>Yeast C1D domain-containing protein</fullName>
    </alternativeName>
    <alternativeName>
        <fullName>rRNA processing protein 47</fullName>
    </alternativeName>
</protein>